<protein>
    <recommendedName>
        <fullName>Neurotensin/neuromedin N</fullName>
    </recommendedName>
    <component>
        <recommendedName>
            <fullName>Large neuromedin N</fullName>
        </recommendedName>
        <alternativeName>
            <fullName>NmN-125</fullName>
        </alternativeName>
    </component>
    <component>
        <recommendedName>
            <fullName>Neuromedin N</fullName>
            <shortName>NN</shortName>
            <shortName>NmN</shortName>
        </recommendedName>
    </component>
    <component>
        <recommendedName>
            <fullName>Neurotensin</fullName>
            <shortName>NT</shortName>
        </recommendedName>
    </component>
    <component>
        <recommendedName>
            <fullName>Tail peptide</fullName>
        </recommendedName>
    </component>
</protein>
<evidence type="ECO:0000250" key="1">
    <source>
        <dbReference type="UniProtKB" id="P30990"/>
    </source>
</evidence>
<evidence type="ECO:0000255" key="2"/>
<evidence type="ECO:0000269" key="3">
    <source>
    </source>
</evidence>
<evidence type="ECO:0000305" key="4"/>
<dbReference type="EMBL" id="M21187">
    <property type="protein sequence ID" value="AAA41712.1"/>
    <property type="status" value="ALT_INIT"/>
    <property type="molecule type" value="Genomic_DNA"/>
</dbReference>
<dbReference type="EMBL" id="M21218">
    <property type="protein sequence ID" value="AAA41712.1"/>
    <property type="status" value="JOINED"/>
    <property type="molecule type" value="Genomic_DNA"/>
</dbReference>
<dbReference type="PIR" id="A28146">
    <property type="entry name" value="A28146"/>
</dbReference>
<dbReference type="PDB" id="3ZEV">
    <property type="method" value="X-ray"/>
    <property type="resolution" value="3.00 A"/>
    <property type="chains" value="C/D=157-162"/>
</dbReference>
<dbReference type="PDB" id="4BUO">
    <property type="method" value="X-ray"/>
    <property type="resolution" value="2.75 A"/>
    <property type="chains" value="C/D=157-162"/>
</dbReference>
<dbReference type="PDB" id="4BV0">
    <property type="method" value="X-ray"/>
    <property type="resolution" value="3.10 A"/>
    <property type="chains" value="C/D=157-162"/>
</dbReference>
<dbReference type="PDB" id="4BWB">
    <property type="method" value="X-ray"/>
    <property type="resolution" value="3.57 A"/>
    <property type="chains" value="C/D=157-162"/>
</dbReference>
<dbReference type="PDB" id="4GRV">
    <property type="method" value="X-ray"/>
    <property type="resolution" value="2.80 A"/>
    <property type="chains" value="B=157-162"/>
</dbReference>
<dbReference type="PDB" id="4XEE">
    <property type="method" value="X-ray"/>
    <property type="resolution" value="2.90 A"/>
    <property type="chains" value="B=157-162"/>
</dbReference>
<dbReference type="PDB" id="4XES">
    <property type="method" value="X-ray"/>
    <property type="resolution" value="2.60 A"/>
    <property type="chains" value="B=157-162"/>
</dbReference>
<dbReference type="PDB" id="5T04">
    <property type="method" value="X-ray"/>
    <property type="resolution" value="3.30 A"/>
    <property type="chains" value="B=157-162"/>
</dbReference>
<dbReference type="PDB" id="7L0P">
    <property type="method" value="EM"/>
    <property type="resolution" value="4.10 A"/>
    <property type="chains" value="D=157-162"/>
</dbReference>
<dbReference type="PDB" id="7L0Q">
    <property type="method" value="EM"/>
    <property type="resolution" value="4.30 A"/>
    <property type="chains" value="D=157-162"/>
</dbReference>
<dbReference type="PDB" id="7L0R">
    <property type="method" value="EM"/>
    <property type="resolution" value="4.20 A"/>
    <property type="chains" value="D=157-162"/>
</dbReference>
<dbReference type="PDB" id="7L0S">
    <property type="method" value="EM"/>
    <property type="resolution" value="4.50 A"/>
    <property type="chains" value="D=157-162"/>
</dbReference>
<dbReference type="PDB" id="8FMZ">
    <property type="method" value="EM"/>
    <property type="resolution" value="2.59 A"/>
    <property type="chains" value="F=157-162"/>
</dbReference>
<dbReference type="PDB" id="8FN0">
    <property type="method" value="EM"/>
    <property type="resolution" value="2.89 A"/>
    <property type="chains" value="F=157-162"/>
</dbReference>
<dbReference type="PDB" id="8FN1">
    <property type="method" value="EM"/>
    <property type="resolution" value="2.88 A"/>
    <property type="chains" value="F=157-162"/>
</dbReference>
<dbReference type="PDBsum" id="3ZEV"/>
<dbReference type="PDBsum" id="4BUO"/>
<dbReference type="PDBsum" id="4BV0"/>
<dbReference type="PDBsum" id="4BWB"/>
<dbReference type="PDBsum" id="4GRV"/>
<dbReference type="PDBsum" id="4XEE"/>
<dbReference type="PDBsum" id="4XES"/>
<dbReference type="PDBsum" id="5T04"/>
<dbReference type="PDBsum" id="7L0P"/>
<dbReference type="PDBsum" id="7L0Q"/>
<dbReference type="PDBsum" id="7L0R"/>
<dbReference type="PDBsum" id="7L0S"/>
<dbReference type="PDBsum" id="8FMZ"/>
<dbReference type="PDBsum" id="8FN0"/>
<dbReference type="PDBsum" id="8FN1"/>
<dbReference type="EMDB" id="EMD-23099"/>
<dbReference type="EMDB" id="EMD-23100"/>
<dbReference type="EMDB" id="EMD-23101"/>
<dbReference type="EMDB" id="EMD-23102"/>
<dbReference type="EMDB" id="EMD-29301"/>
<dbReference type="EMDB" id="EMD-29302"/>
<dbReference type="EMDB" id="EMD-29303"/>
<dbReference type="SMR" id="P20068"/>
<dbReference type="FunCoup" id="P20068">
    <property type="interactions" value="62"/>
</dbReference>
<dbReference type="IntAct" id="P20068">
    <property type="interactions" value="3"/>
</dbReference>
<dbReference type="STRING" id="10116.ENSRNOP00000005706"/>
<dbReference type="PhosphoSitePlus" id="P20068"/>
<dbReference type="PaxDb" id="10116-ENSRNOP00000005706"/>
<dbReference type="UCSC" id="RGD:621612">
    <property type="organism name" value="rat"/>
</dbReference>
<dbReference type="AGR" id="RGD:621612"/>
<dbReference type="RGD" id="621612">
    <property type="gene designation" value="Nts"/>
</dbReference>
<dbReference type="eggNOG" id="ENOG502RYW6">
    <property type="taxonomic scope" value="Eukaryota"/>
</dbReference>
<dbReference type="InParanoid" id="P20068"/>
<dbReference type="OrthoDB" id="9929102at2759"/>
<dbReference type="PhylomeDB" id="P20068"/>
<dbReference type="Reactome" id="R-RNO-375276">
    <property type="pathway name" value="Peptide ligand-binding receptors"/>
</dbReference>
<dbReference type="Reactome" id="R-RNO-416476">
    <property type="pathway name" value="G alpha (q) signalling events"/>
</dbReference>
<dbReference type="EvolutionaryTrace" id="P20068"/>
<dbReference type="PRO" id="PR:P20068"/>
<dbReference type="Proteomes" id="UP000002494">
    <property type="component" value="Unplaced"/>
</dbReference>
<dbReference type="GO" id="GO:0043679">
    <property type="term" value="C:axon terminus"/>
    <property type="evidence" value="ECO:0000314"/>
    <property type="project" value="RGD"/>
</dbReference>
<dbReference type="GO" id="GO:0005576">
    <property type="term" value="C:extracellular region"/>
    <property type="evidence" value="ECO:0007669"/>
    <property type="project" value="UniProtKB-SubCell"/>
</dbReference>
<dbReference type="GO" id="GO:0043025">
    <property type="term" value="C:neuronal cell body"/>
    <property type="evidence" value="ECO:0000314"/>
    <property type="project" value="RGD"/>
</dbReference>
<dbReference type="GO" id="GO:0030133">
    <property type="term" value="C:transport vesicle"/>
    <property type="evidence" value="ECO:0007669"/>
    <property type="project" value="UniProtKB-SubCell"/>
</dbReference>
<dbReference type="GO" id="GO:0005184">
    <property type="term" value="F:neuropeptide hormone activity"/>
    <property type="evidence" value="ECO:0007669"/>
    <property type="project" value="InterPro"/>
</dbReference>
<dbReference type="GO" id="GO:0071855">
    <property type="term" value="F:neuropeptide receptor binding"/>
    <property type="evidence" value="ECO:0000266"/>
    <property type="project" value="RGD"/>
</dbReference>
<dbReference type="GO" id="GO:0048018">
    <property type="term" value="F:receptor ligand activity"/>
    <property type="evidence" value="ECO:0000266"/>
    <property type="project" value="RGD"/>
</dbReference>
<dbReference type="GO" id="GO:0097746">
    <property type="term" value="P:blood vessel diameter maintenance"/>
    <property type="evidence" value="ECO:0007669"/>
    <property type="project" value="UniProtKB-KW"/>
</dbReference>
<dbReference type="GO" id="GO:0071549">
    <property type="term" value="P:cellular response to dexamethasone stimulus"/>
    <property type="evidence" value="ECO:0000270"/>
    <property type="project" value="RGD"/>
</dbReference>
<dbReference type="GO" id="GO:0071285">
    <property type="term" value="P:cellular response to lithium ion"/>
    <property type="evidence" value="ECO:0000270"/>
    <property type="project" value="RGD"/>
</dbReference>
<dbReference type="GO" id="GO:1990090">
    <property type="term" value="P:cellular response to nerve growth factor stimulus"/>
    <property type="evidence" value="ECO:0000270"/>
    <property type="project" value="RGD"/>
</dbReference>
<dbReference type="GO" id="GO:0048565">
    <property type="term" value="P:digestive tract development"/>
    <property type="evidence" value="ECO:0000270"/>
    <property type="project" value="RGD"/>
</dbReference>
<dbReference type="GO" id="GO:0006972">
    <property type="term" value="P:hyperosmotic response"/>
    <property type="evidence" value="ECO:0000270"/>
    <property type="project" value="RGD"/>
</dbReference>
<dbReference type="GO" id="GO:0001889">
    <property type="term" value="P:liver development"/>
    <property type="evidence" value="ECO:0000270"/>
    <property type="project" value="RGD"/>
</dbReference>
<dbReference type="GO" id="GO:0010629">
    <property type="term" value="P:negative regulation of gene expression"/>
    <property type="evidence" value="ECO:0000266"/>
    <property type="project" value="RGD"/>
</dbReference>
<dbReference type="GO" id="GO:0007218">
    <property type="term" value="P:neuropeptide signaling pathway"/>
    <property type="evidence" value="ECO:0000266"/>
    <property type="project" value="RGD"/>
</dbReference>
<dbReference type="GO" id="GO:0010628">
    <property type="term" value="P:positive regulation of gene expression"/>
    <property type="evidence" value="ECO:0000266"/>
    <property type="project" value="RGD"/>
</dbReference>
<dbReference type="GO" id="GO:0051897">
    <property type="term" value="P:positive regulation of phosphatidylinositol 3-kinase/protein kinase B signal transduction"/>
    <property type="evidence" value="ECO:0000266"/>
    <property type="project" value="RGD"/>
</dbReference>
<dbReference type="GO" id="GO:0090325">
    <property type="term" value="P:regulation of locomotion involved in locomotory behavior"/>
    <property type="evidence" value="ECO:0000315"/>
    <property type="project" value="RGD"/>
</dbReference>
<dbReference type="GO" id="GO:0001975">
    <property type="term" value="P:response to amphetamine"/>
    <property type="evidence" value="ECO:0000270"/>
    <property type="project" value="RGD"/>
</dbReference>
<dbReference type="GO" id="GO:0097332">
    <property type="term" value="P:response to antipsychotic drug"/>
    <property type="evidence" value="ECO:0000270"/>
    <property type="project" value="RGD"/>
</dbReference>
<dbReference type="GO" id="GO:0048678">
    <property type="term" value="P:response to axon injury"/>
    <property type="evidence" value="ECO:0000270"/>
    <property type="project" value="RGD"/>
</dbReference>
<dbReference type="GO" id="GO:0042220">
    <property type="term" value="P:response to cocaine"/>
    <property type="evidence" value="ECO:0000270"/>
    <property type="project" value="RGD"/>
</dbReference>
<dbReference type="GO" id="GO:0051412">
    <property type="term" value="P:response to corticosterone"/>
    <property type="evidence" value="ECO:0000270"/>
    <property type="project" value="RGD"/>
</dbReference>
<dbReference type="GO" id="GO:0032355">
    <property type="term" value="P:response to estradiol"/>
    <property type="evidence" value="ECO:0000270"/>
    <property type="project" value="RGD"/>
</dbReference>
<dbReference type="GO" id="GO:0051385">
    <property type="term" value="P:response to mineralocorticoid"/>
    <property type="evidence" value="ECO:0000270"/>
    <property type="project" value="RGD"/>
</dbReference>
<dbReference type="GO" id="GO:0008542">
    <property type="term" value="P:visual learning"/>
    <property type="evidence" value="ECO:0000315"/>
    <property type="project" value="RGD"/>
</dbReference>
<dbReference type="InterPro" id="IPR008055">
    <property type="entry name" value="NeurotensiN"/>
</dbReference>
<dbReference type="PANTHER" id="PTHR15356">
    <property type="entry name" value="NEUROTENSIN/NEUROMEDIN N"/>
    <property type="match status" value="1"/>
</dbReference>
<dbReference type="PANTHER" id="PTHR15356:SF0">
    <property type="entry name" value="NEUROTENSIN_NEUROMEDIN N"/>
    <property type="match status" value="1"/>
</dbReference>
<dbReference type="Pfam" id="PF07421">
    <property type="entry name" value="Pro-NT_NN"/>
    <property type="match status" value="1"/>
</dbReference>
<dbReference type="PRINTS" id="PR01668">
    <property type="entry name" value="NEUROTENSIN"/>
</dbReference>
<reference key="1">
    <citation type="journal article" date="1988" name="J. Biol. Chem.">
        <title>The rat gene encoding neurotensin and neuromedin N. Structure, tissue-specific expression, and evolution of exon sequences.</title>
        <authorList>
            <person name="Kislauskis E."/>
            <person name="Bullock B."/>
            <person name="McNeil S."/>
            <person name="Dobner P.R."/>
        </authorList>
    </citation>
    <scope>NUCLEOTIDE SEQUENCE [GENOMIC DNA]</scope>
</reference>
<reference key="2">
    <citation type="journal article" date="1993" name="Biochem. J.">
        <title>Immunological and biochemical characterization of processing products from the neurotensin/neuromedin N precursor in the rat medullary thyroid carcinoma 6-23 cell line.</title>
        <authorList>
            <person name="Bidard J.-N."/>
            <person name="de Nadai F."/>
            <person name="Rovere C."/>
            <person name="Moinier D."/>
            <person name="Laur J."/>
            <person name="Martinez J."/>
            <person name="Cuber J.-C."/>
            <person name="Kitabgi P."/>
        </authorList>
    </citation>
    <scope>PROTEIN SEQUENCE OF 23-42</scope>
    <scope>PROTEOLYTIC PROCESSING</scope>
</reference>
<reference key="3">
    <citation type="journal article" date="1993" name="Endocrinology">
        <title>Biosynthesis and posttranslational processing of the neurotensin/neuromedin N precursor in the rat medullary thyroid carcinoma 6-23 cell line. Effect of dexamethasone.</title>
        <authorList>
            <person name="de Nadai F."/>
            <person name="Rovere C."/>
            <person name="Bidard J.-N."/>
            <person name="Laur J."/>
            <person name="Martinez J."/>
            <person name="Cuber J.-C."/>
            <person name="Kitabgi P."/>
        </authorList>
    </citation>
    <scope>PROTEOLYTIC PROCESSING</scope>
</reference>
<accession>P20068</accession>
<accession>Q9QV80</accession>
<gene>
    <name type="primary">Nts</name>
</gene>
<comment type="function">
    <text>Neurotensin may play an endocrine or paracrine role in the regulation of fat metabolism. It causes contraction of smooth muscle.</text>
</comment>
<comment type="subunit">
    <text evidence="1">Interacts with NTSR1. Interacts with SORT1. Interacts with SORL1.</text>
</comment>
<comment type="subcellular location">
    <subcellularLocation>
        <location>Secreted</location>
    </subcellularLocation>
    <subcellularLocation>
        <location>Cytoplasmic vesicle</location>
        <location>Secretory vesicle</location>
    </subcellularLocation>
    <text>Packaged within secretory vesicles.</text>
</comment>
<comment type="PTM">
    <molecule>Neurotensin</molecule>
    <text evidence="1">Neurotensin is cleaved and degraded by Angiotensin-converting enzyme (ACE) and neprilysin (MME).</text>
</comment>
<comment type="similarity">
    <text evidence="4">Belongs to the neurotensin family.</text>
</comment>
<comment type="sequence caution" evidence="4">
    <conflict type="erroneous initiation">
        <sequence resource="EMBL-CDS" id="AAA41712"/>
    </conflict>
</comment>
<feature type="signal peptide" evidence="3">
    <location>
        <begin position="1"/>
        <end position="22"/>
    </location>
</feature>
<feature type="chain" id="PRO_0000019530" description="Large neuromedin N">
    <location>
        <begin position="23"/>
        <end position="147"/>
    </location>
</feature>
<feature type="peptide" id="PRO_0000019531" description="Neuromedin N">
    <location>
        <begin position="142"/>
        <end position="147"/>
    </location>
</feature>
<feature type="peptide" id="PRO_0000019532" description="Neurotensin">
    <location>
        <begin position="150"/>
        <end position="162"/>
    </location>
</feature>
<feature type="peptide" id="PRO_0000019533" description="Tail peptide" evidence="2">
    <location>
        <begin position="165"/>
        <end position="169"/>
    </location>
</feature>
<feature type="site" description="Cleavage; by MME" evidence="1">
    <location>
        <begin position="159"/>
        <end position="160"/>
    </location>
</feature>
<feature type="site" description="Cleavage; by ACE and MME" evidence="1">
    <location>
        <begin position="160"/>
        <end position="161"/>
    </location>
</feature>
<name>NEUT_RAT</name>
<proteinExistence type="evidence at protein level"/>
<sequence length="169" mass="19564">MIGMNLQLVCLTLLAFSSWSLCSDSEEDVRALEADLLTNMHASKVSKGSPPSWKMTLLNVCSLINNLNSAAEEAGEMRDDDLVAKRKLPLVLDDFSLEALLTVFQLQKICRSRAFQHWEIIQEDILDHGNEKTEKEEVIKRKIPYILKRQLYENKPRRPYILKRASYYY</sequence>
<keyword id="KW-0002">3D-structure</keyword>
<keyword id="KW-0165">Cleavage on pair of basic residues</keyword>
<keyword id="KW-0968">Cytoplasmic vesicle</keyword>
<keyword id="KW-0903">Direct protein sequencing</keyword>
<keyword id="KW-1185">Reference proteome</keyword>
<keyword id="KW-0964">Secreted</keyword>
<keyword id="KW-0732">Signal</keyword>
<keyword id="KW-0838">Vasoactive</keyword>
<organism>
    <name type="scientific">Rattus norvegicus</name>
    <name type="common">Rat</name>
    <dbReference type="NCBI Taxonomy" id="10116"/>
    <lineage>
        <taxon>Eukaryota</taxon>
        <taxon>Metazoa</taxon>
        <taxon>Chordata</taxon>
        <taxon>Craniata</taxon>
        <taxon>Vertebrata</taxon>
        <taxon>Euteleostomi</taxon>
        <taxon>Mammalia</taxon>
        <taxon>Eutheria</taxon>
        <taxon>Euarchontoglires</taxon>
        <taxon>Glires</taxon>
        <taxon>Rodentia</taxon>
        <taxon>Myomorpha</taxon>
        <taxon>Muroidea</taxon>
        <taxon>Muridae</taxon>
        <taxon>Murinae</taxon>
        <taxon>Rattus</taxon>
    </lineage>
</organism>